<protein>
    <recommendedName>
        <fullName evidence="1">Ribosomal RNA small subunit methyltransferase H</fullName>
        <ecNumber evidence="1">2.1.1.199</ecNumber>
    </recommendedName>
    <alternativeName>
        <fullName evidence="1">16S rRNA m(4)C1402 methyltransferase</fullName>
    </alternativeName>
    <alternativeName>
        <fullName evidence="1">rRNA (cytosine-N(4)-)-methyltransferase RsmH</fullName>
    </alternativeName>
</protein>
<dbReference type="EC" id="2.1.1.199" evidence="1"/>
<dbReference type="EMBL" id="CP000259">
    <property type="protein sequence ID" value="ABF32552.1"/>
    <property type="status" value="ALT_INIT"/>
    <property type="molecule type" value="Genomic_DNA"/>
</dbReference>
<dbReference type="RefSeq" id="WP_002988893.1">
    <property type="nucleotide sequence ID" value="NC_008021.1"/>
</dbReference>
<dbReference type="SMR" id="Q1JKL7"/>
<dbReference type="KEGG" id="spk:MGAS9429_Spy1365"/>
<dbReference type="HOGENOM" id="CLU_038422_2_0_9"/>
<dbReference type="Proteomes" id="UP000002433">
    <property type="component" value="Chromosome"/>
</dbReference>
<dbReference type="GO" id="GO:0005737">
    <property type="term" value="C:cytoplasm"/>
    <property type="evidence" value="ECO:0007669"/>
    <property type="project" value="UniProtKB-SubCell"/>
</dbReference>
<dbReference type="GO" id="GO:0071424">
    <property type="term" value="F:rRNA (cytosine-N4-)-methyltransferase activity"/>
    <property type="evidence" value="ECO:0007669"/>
    <property type="project" value="UniProtKB-UniRule"/>
</dbReference>
<dbReference type="GO" id="GO:0070475">
    <property type="term" value="P:rRNA base methylation"/>
    <property type="evidence" value="ECO:0007669"/>
    <property type="project" value="UniProtKB-UniRule"/>
</dbReference>
<dbReference type="FunFam" id="1.10.150.170:FF:000001">
    <property type="entry name" value="Ribosomal RNA small subunit methyltransferase H"/>
    <property type="match status" value="1"/>
</dbReference>
<dbReference type="Gene3D" id="1.10.150.170">
    <property type="entry name" value="Putative methyltransferase TM0872, insert domain"/>
    <property type="match status" value="1"/>
</dbReference>
<dbReference type="Gene3D" id="3.40.50.150">
    <property type="entry name" value="Vaccinia Virus protein VP39"/>
    <property type="match status" value="1"/>
</dbReference>
<dbReference type="HAMAP" id="MF_01007">
    <property type="entry name" value="16SrRNA_methyltr_H"/>
    <property type="match status" value="1"/>
</dbReference>
<dbReference type="InterPro" id="IPR002903">
    <property type="entry name" value="RsmH"/>
</dbReference>
<dbReference type="InterPro" id="IPR023397">
    <property type="entry name" value="SAM-dep_MeTrfase_MraW_recog"/>
</dbReference>
<dbReference type="InterPro" id="IPR029063">
    <property type="entry name" value="SAM-dependent_MTases_sf"/>
</dbReference>
<dbReference type="NCBIfam" id="TIGR00006">
    <property type="entry name" value="16S rRNA (cytosine(1402)-N(4))-methyltransferase RsmH"/>
    <property type="match status" value="1"/>
</dbReference>
<dbReference type="PANTHER" id="PTHR11265:SF0">
    <property type="entry name" value="12S RRNA N4-METHYLCYTIDINE METHYLTRANSFERASE"/>
    <property type="match status" value="1"/>
</dbReference>
<dbReference type="PANTHER" id="PTHR11265">
    <property type="entry name" value="S-ADENOSYL-METHYLTRANSFERASE MRAW"/>
    <property type="match status" value="1"/>
</dbReference>
<dbReference type="Pfam" id="PF01795">
    <property type="entry name" value="Methyltransf_5"/>
    <property type="match status" value="1"/>
</dbReference>
<dbReference type="PIRSF" id="PIRSF004486">
    <property type="entry name" value="MraW"/>
    <property type="match status" value="1"/>
</dbReference>
<dbReference type="SUPFAM" id="SSF81799">
    <property type="entry name" value="Putative methyltransferase TM0872, insert domain"/>
    <property type="match status" value="1"/>
</dbReference>
<dbReference type="SUPFAM" id="SSF53335">
    <property type="entry name" value="S-adenosyl-L-methionine-dependent methyltransferases"/>
    <property type="match status" value="1"/>
</dbReference>
<comment type="function">
    <text evidence="1">Specifically methylates the N4 position of cytidine in position 1402 (C1402) of 16S rRNA.</text>
</comment>
<comment type="catalytic activity">
    <reaction evidence="1">
        <text>cytidine(1402) in 16S rRNA + S-adenosyl-L-methionine = N(4)-methylcytidine(1402) in 16S rRNA + S-adenosyl-L-homocysteine + H(+)</text>
        <dbReference type="Rhea" id="RHEA:42928"/>
        <dbReference type="Rhea" id="RHEA-COMP:10286"/>
        <dbReference type="Rhea" id="RHEA-COMP:10287"/>
        <dbReference type="ChEBI" id="CHEBI:15378"/>
        <dbReference type="ChEBI" id="CHEBI:57856"/>
        <dbReference type="ChEBI" id="CHEBI:59789"/>
        <dbReference type="ChEBI" id="CHEBI:74506"/>
        <dbReference type="ChEBI" id="CHEBI:82748"/>
        <dbReference type="EC" id="2.1.1.199"/>
    </reaction>
</comment>
<comment type="subcellular location">
    <subcellularLocation>
        <location evidence="1">Cytoplasm</location>
    </subcellularLocation>
</comment>
<comment type="similarity">
    <text evidence="1">Belongs to the methyltransferase superfamily. RsmH family.</text>
</comment>
<comment type="sequence caution" evidence="2">
    <conflict type="erroneous initiation">
        <sequence resource="EMBL-CDS" id="ABF32552"/>
    </conflict>
</comment>
<name>RSMH_STRPC</name>
<organism>
    <name type="scientific">Streptococcus pyogenes serotype M12 (strain MGAS9429)</name>
    <dbReference type="NCBI Taxonomy" id="370551"/>
    <lineage>
        <taxon>Bacteria</taxon>
        <taxon>Bacillati</taxon>
        <taxon>Bacillota</taxon>
        <taxon>Bacilli</taxon>
        <taxon>Lactobacillales</taxon>
        <taxon>Streptococcaceae</taxon>
        <taxon>Streptococcus</taxon>
    </lineage>
</organism>
<reference key="1">
    <citation type="journal article" date="2006" name="Proc. Natl. Acad. Sci. U.S.A.">
        <title>Molecular genetic anatomy of inter- and intraserotype variation in the human bacterial pathogen group A Streptococcus.</title>
        <authorList>
            <person name="Beres S.B."/>
            <person name="Richter E.W."/>
            <person name="Nagiec M.J."/>
            <person name="Sumby P."/>
            <person name="Porcella S.F."/>
            <person name="DeLeo F.R."/>
            <person name="Musser J.M."/>
        </authorList>
    </citation>
    <scope>NUCLEOTIDE SEQUENCE [LARGE SCALE GENOMIC DNA]</scope>
    <source>
        <strain>MGAS9429</strain>
    </source>
</reference>
<accession>Q1JKL7</accession>
<keyword id="KW-0963">Cytoplasm</keyword>
<keyword id="KW-0489">Methyltransferase</keyword>
<keyword id="KW-0698">rRNA processing</keyword>
<keyword id="KW-0949">S-adenosyl-L-methionine</keyword>
<keyword id="KW-0808">Transferase</keyword>
<evidence type="ECO:0000255" key="1">
    <source>
        <dbReference type="HAMAP-Rule" id="MF_01007"/>
    </source>
</evidence>
<evidence type="ECO:0000305" key="2"/>
<feature type="chain" id="PRO_0000387159" description="Ribosomal RNA small subunit methyltransferase H">
    <location>
        <begin position="1"/>
        <end position="316"/>
    </location>
</feature>
<feature type="binding site" evidence="1">
    <location>
        <begin position="35"/>
        <end position="37"/>
    </location>
    <ligand>
        <name>S-adenosyl-L-methionine</name>
        <dbReference type="ChEBI" id="CHEBI:59789"/>
    </ligand>
</feature>
<feature type="binding site" evidence="1">
    <location>
        <position position="55"/>
    </location>
    <ligand>
        <name>S-adenosyl-L-methionine</name>
        <dbReference type="ChEBI" id="CHEBI:59789"/>
    </ligand>
</feature>
<feature type="binding site" evidence="1">
    <location>
        <position position="84"/>
    </location>
    <ligand>
        <name>S-adenosyl-L-methionine</name>
        <dbReference type="ChEBI" id="CHEBI:59789"/>
    </ligand>
</feature>
<feature type="binding site" evidence="1">
    <location>
        <position position="105"/>
    </location>
    <ligand>
        <name>S-adenosyl-L-methionine</name>
        <dbReference type="ChEBI" id="CHEBI:59789"/>
    </ligand>
</feature>
<feature type="binding site" evidence="1">
    <location>
        <position position="112"/>
    </location>
    <ligand>
        <name>S-adenosyl-L-methionine</name>
        <dbReference type="ChEBI" id="CHEBI:59789"/>
    </ligand>
</feature>
<proteinExistence type="inferred from homology"/>
<sequence>MTKEFHHVTVLLHETVDMLDIKPDGIYVDATLGGSGHSAYLLSKLGEEGHLYCFDQDQKAIDNAQVTLKSYIDKGQVTFIKDNFRHLKARLTALGVDEIDGILYDLGVSSPQLDERERGFSYKQDAPLDMRMDRQSLLTAYEVVNTYPFNDLVKIFFKYGEDKFSKQIARKIEQARAIKPIETTTELAELIKAAKPAKELKKKGHPAKQIFQAIRIEVNDELGAADESIQDAMELLALDGRISVITFHSLEDRLTKQLFKEASTVDVPKGLPLIPEDMKPKFELVSRKPILPSHSELTANKRAHSAKLRVAKKIRK</sequence>
<gene>
    <name evidence="1" type="primary">rsmH</name>
    <name type="synonym">mraW</name>
    <name type="ordered locus">MGAS9429_Spy1365</name>
</gene>